<reference key="1">
    <citation type="submission" date="2007-09" db="EMBL/GenBank/DDBJ databases">
        <title>Complete sequence of chromosome of Serratia proteamaculans 568.</title>
        <authorList>
            <consortium name="US DOE Joint Genome Institute"/>
            <person name="Copeland A."/>
            <person name="Lucas S."/>
            <person name="Lapidus A."/>
            <person name="Barry K."/>
            <person name="Glavina del Rio T."/>
            <person name="Dalin E."/>
            <person name="Tice H."/>
            <person name="Pitluck S."/>
            <person name="Chain P."/>
            <person name="Malfatti S."/>
            <person name="Shin M."/>
            <person name="Vergez L."/>
            <person name="Schmutz J."/>
            <person name="Larimer F."/>
            <person name="Land M."/>
            <person name="Hauser L."/>
            <person name="Kyrpides N."/>
            <person name="Kim E."/>
            <person name="Taghavi S."/>
            <person name="Newman L."/>
            <person name="Vangronsveld J."/>
            <person name="van der Lelie D."/>
            <person name="Richardson P."/>
        </authorList>
    </citation>
    <scope>NUCLEOTIDE SEQUENCE [LARGE SCALE GENOMIC DNA]</scope>
    <source>
        <strain>568</strain>
    </source>
</reference>
<comment type="function">
    <text evidence="1">Specifically dimethylates two adjacent adenosines (A1518 and A1519) in the loop of a conserved hairpin near the 3'-end of 16S rRNA in the 30S particle. May play a critical role in biogenesis of 30S subunits.</text>
</comment>
<comment type="catalytic activity">
    <reaction evidence="1">
        <text>adenosine(1518)/adenosine(1519) in 16S rRNA + 4 S-adenosyl-L-methionine = N(6)-dimethyladenosine(1518)/N(6)-dimethyladenosine(1519) in 16S rRNA + 4 S-adenosyl-L-homocysteine + 4 H(+)</text>
        <dbReference type="Rhea" id="RHEA:19609"/>
        <dbReference type="Rhea" id="RHEA-COMP:10232"/>
        <dbReference type="Rhea" id="RHEA-COMP:10233"/>
        <dbReference type="ChEBI" id="CHEBI:15378"/>
        <dbReference type="ChEBI" id="CHEBI:57856"/>
        <dbReference type="ChEBI" id="CHEBI:59789"/>
        <dbReference type="ChEBI" id="CHEBI:74411"/>
        <dbReference type="ChEBI" id="CHEBI:74493"/>
        <dbReference type="EC" id="2.1.1.182"/>
    </reaction>
</comment>
<comment type="subcellular location">
    <subcellularLocation>
        <location evidence="1">Cytoplasm</location>
    </subcellularLocation>
</comment>
<comment type="similarity">
    <text evidence="1">Belongs to the class I-like SAM-binding methyltransferase superfamily. rRNA adenine N(6)-methyltransferase family. RsmA subfamily.</text>
</comment>
<evidence type="ECO:0000255" key="1">
    <source>
        <dbReference type="HAMAP-Rule" id="MF_00607"/>
    </source>
</evidence>
<organism>
    <name type="scientific">Serratia proteamaculans (strain 568)</name>
    <dbReference type="NCBI Taxonomy" id="399741"/>
    <lineage>
        <taxon>Bacteria</taxon>
        <taxon>Pseudomonadati</taxon>
        <taxon>Pseudomonadota</taxon>
        <taxon>Gammaproteobacteria</taxon>
        <taxon>Enterobacterales</taxon>
        <taxon>Yersiniaceae</taxon>
        <taxon>Serratia</taxon>
    </lineage>
</organism>
<proteinExistence type="inferred from homology"/>
<dbReference type="EC" id="2.1.1.182" evidence="1"/>
<dbReference type="EMBL" id="CP000826">
    <property type="protein sequence ID" value="ABV39830.1"/>
    <property type="molecule type" value="Genomic_DNA"/>
</dbReference>
<dbReference type="SMR" id="A8G9P0"/>
<dbReference type="STRING" id="399741.Spro_0724"/>
<dbReference type="KEGG" id="spe:Spro_0724"/>
<dbReference type="eggNOG" id="COG0030">
    <property type="taxonomic scope" value="Bacteria"/>
</dbReference>
<dbReference type="HOGENOM" id="CLU_041220_0_1_6"/>
<dbReference type="OrthoDB" id="9814755at2"/>
<dbReference type="GO" id="GO:0005829">
    <property type="term" value="C:cytosol"/>
    <property type="evidence" value="ECO:0007669"/>
    <property type="project" value="TreeGrafter"/>
</dbReference>
<dbReference type="GO" id="GO:0052908">
    <property type="term" value="F:16S rRNA (adenine(1518)-N(6)/adenine(1519)-N(6))-dimethyltransferase activity"/>
    <property type="evidence" value="ECO:0007669"/>
    <property type="project" value="UniProtKB-EC"/>
</dbReference>
<dbReference type="GO" id="GO:0003723">
    <property type="term" value="F:RNA binding"/>
    <property type="evidence" value="ECO:0007669"/>
    <property type="project" value="UniProtKB-KW"/>
</dbReference>
<dbReference type="CDD" id="cd02440">
    <property type="entry name" value="AdoMet_MTases"/>
    <property type="match status" value="1"/>
</dbReference>
<dbReference type="FunFam" id="1.10.8.100:FF:000001">
    <property type="entry name" value="Ribosomal RNA small subunit methyltransferase A"/>
    <property type="match status" value="1"/>
</dbReference>
<dbReference type="FunFam" id="3.40.50.150:FF:000006">
    <property type="entry name" value="Ribosomal RNA small subunit methyltransferase A"/>
    <property type="match status" value="1"/>
</dbReference>
<dbReference type="Gene3D" id="1.10.8.100">
    <property type="entry name" value="Ribosomal RNA adenine dimethylase-like, domain 2"/>
    <property type="match status" value="1"/>
</dbReference>
<dbReference type="Gene3D" id="3.40.50.150">
    <property type="entry name" value="Vaccinia Virus protein VP39"/>
    <property type="match status" value="1"/>
</dbReference>
<dbReference type="HAMAP" id="MF_00607">
    <property type="entry name" value="16SrRNA_methyltr_A"/>
    <property type="match status" value="1"/>
</dbReference>
<dbReference type="InterPro" id="IPR001737">
    <property type="entry name" value="KsgA/Erm"/>
</dbReference>
<dbReference type="InterPro" id="IPR023165">
    <property type="entry name" value="rRNA_Ade_diMease-like_C"/>
</dbReference>
<dbReference type="InterPro" id="IPR020596">
    <property type="entry name" value="rRNA_Ade_Mease_Trfase_CS"/>
</dbReference>
<dbReference type="InterPro" id="IPR020598">
    <property type="entry name" value="rRNA_Ade_methylase_Trfase_N"/>
</dbReference>
<dbReference type="InterPro" id="IPR011530">
    <property type="entry name" value="rRNA_adenine_dimethylase"/>
</dbReference>
<dbReference type="InterPro" id="IPR029063">
    <property type="entry name" value="SAM-dependent_MTases_sf"/>
</dbReference>
<dbReference type="NCBIfam" id="TIGR00755">
    <property type="entry name" value="ksgA"/>
    <property type="match status" value="1"/>
</dbReference>
<dbReference type="PANTHER" id="PTHR11727">
    <property type="entry name" value="DIMETHYLADENOSINE TRANSFERASE"/>
    <property type="match status" value="1"/>
</dbReference>
<dbReference type="PANTHER" id="PTHR11727:SF7">
    <property type="entry name" value="DIMETHYLADENOSINE TRANSFERASE-RELATED"/>
    <property type="match status" value="1"/>
</dbReference>
<dbReference type="Pfam" id="PF00398">
    <property type="entry name" value="RrnaAD"/>
    <property type="match status" value="1"/>
</dbReference>
<dbReference type="SMART" id="SM00650">
    <property type="entry name" value="rADc"/>
    <property type="match status" value="1"/>
</dbReference>
<dbReference type="SUPFAM" id="SSF53335">
    <property type="entry name" value="S-adenosyl-L-methionine-dependent methyltransferases"/>
    <property type="match status" value="1"/>
</dbReference>
<dbReference type="PROSITE" id="PS01131">
    <property type="entry name" value="RRNA_A_DIMETH"/>
    <property type="match status" value="1"/>
</dbReference>
<dbReference type="PROSITE" id="PS51689">
    <property type="entry name" value="SAM_RNA_A_N6_MT"/>
    <property type="match status" value="1"/>
</dbReference>
<sequence>MNNKVHQGHFARKRFGQNFLTDQFVIDSIVSAIHPMPGEAVVEIGPGLGALTEPVGARMDRMTVIELDRDLAARLANHPQLKDKLTIHQQDAMTVNFAEMAEQAGQPLRVFGNLPYNISTPLMFHLFSYTQAIRDMHFMLQKEVVNRLVAGPNSKAYGRLTVMAQYYCNVIPVLEVPPTSFTPAPKVDSAVVRLVPHLVNPNPVGDVRMLSRITTQAFNQRRKTVRNSLGDLFTPEQLTELGIDPILRAENISVAQYCKLANWLSANPAPQQ</sequence>
<protein>
    <recommendedName>
        <fullName evidence="1">Ribosomal RNA small subunit methyltransferase A</fullName>
        <ecNumber evidence="1">2.1.1.182</ecNumber>
    </recommendedName>
    <alternativeName>
        <fullName evidence="1">16S rRNA (adenine(1518)-N(6)/adenine(1519)-N(6))-dimethyltransferase</fullName>
    </alternativeName>
    <alternativeName>
        <fullName evidence="1">16S rRNA dimethyladenosine transferase</fullName>
    </alternativeName>
    <alternativeName>
        <fullName evidence="1">16S rRNA dimethylase</fullName>
    </alternativeName>
    <alternativeName>
        <fullName evidence="1">S-adenosylmethionine-6-N', N'-adenosyl(rRNA) dimethyltransferase</fullName>
    </alternativeName>
</protein>
<accession>A8G9P0</accession>
<name>RSMA_SERP5</name>
<feature type="chain" id="PRO_1000061287" description="Ribosomal RNA small subunit methyltransferase A">
    <location>
        <begin position="1"/>
        <end position="272"/>
    </location>
</feature>
<feature type="binding site" evidence="1">
    <location>
        <position position="18"/>
    </location>
    <ligand>
        <name>S-adenosyl-L-methionine</name>
        <dbReference type="ChEBI" id="CHEBI:59789"/>
    </ligand>
</feature>
<feature type="binding site" evidence="1">
    <location>
        <position position="20"/>
    </location>
    <ligand>
        <name>S-adenosyl-L-methionine</name>
        <dbReference type="ChEBI" id="CHEBI:59789"/>
    </ligand>
</feature>
<feature type="binding site" evidence="1">
    <location>
        <position position="45"/>
    </location>
    <ligand>
        <name>S-adenosyl-L-methionine</name>
        <dbReference type="ChEBI" id="CHEBI:59789"/>
    </ligand>
</feature>
<feature type="binding site" evidence="1">
    <location>
        <position position="66"/>
    </location>
    <ligand>
        <name>S-adenosyl-L-methionine</name>
        <dbReference type="ChEBI" id="CHEBI:59789"/>
    </ligand>
</feature>
<feature type="binding site" evidence="1">
    <location>
        <position position="91"/>
    </location>
    <ligand>
        <name>S-adenosyl-L-methionine</name>
        <dbReference type="ChEBI" id="CHEBI:59789"/>
    </ligand>
</feature>
<feature type="binding site" evidence="1">
    <location>
        <position position="113"/>
    </location>
    <ligand>
        <name>S-adenosyl-L-methionine</name>
        <dbReference type="ChEBI" id="CHEBI:59789"/>
    </ligand>
</feature>
<keyword id="KW-0963">Cytoplasm</keyword>
<keyword id="KW-0489">Methyltransferase</keyword>
<keyword id="KW-0694">RNA-binding</keyword>
<keyword id="KW-0698">rRNA processing</keyword>
<keyword id="KW-0949">S-adenosyl-L-methionine</keyword>
<keyword id="KW-0808">Transferase</keyword>
<gene>
    <name evidence="1" type="primary">rsmA</name>
    <name evidence="1" type="synonym">ksgA</name>
    <name type="ordered locus">Spro_0724</name>
</gene>